<reference key="1">
    <citation type="journal article" date="1995" name="J. Mol. Biol.">
        <title>The mitochondrial DNA of the amoeboid protozoon, Acanthamoeba castellanii: complete sequence, gene content and genome organization.</title>
        <authorList>
            <person name="Burger G."/>
            <person name="Plante I."/>
            <person name="Lonergan K.M."/>
            <person name="Gray M.W."/>
        </authorList>
    </citation>
    <scope>NUCLEOTIDE SEQUENCE [GENOMIC DNA]</scope>
    <source>
        <strain>ATCC 30010 / Neff</strain>
    </source>
</reference>
<accession>Q37380</accession>
<feature type="chain" id="PRO_0000144411" description="ATP synthase subunit alpha, mitochondrial">
    <location>
        <begin position="1"/>
        <end position="522"/>
    </location>
</feature>
<feature type="binding site" evidence="1">
    <location>
        <begin position="172"/>
        <end position="179"/>
    </location>
    <ligand>
        <name>ATP</name>
        <dbReference type="ChEBI" id="CHEBI:30616"/>
    </ligand>
</feature>
<feature type="site" description="Required for activity" evidence="1">
    <location>
        <position position="372"/>
    </location>
</feature>
<evidence type="ECO:0000250" key="1"/>
<evidence type="ECO:0000305" key="2"/>
<geneLocation type="mitochondrion"/>
<proteinExistence type="inferred from homology"/>
<gene>
    <name type="primary">ATP1</name>
</gene>
<comment type="function">
    <text evidence="1">Mitochondrial membrane ATP synthase (F(1)F(0) ATP synthase or Complex V) produces ATP from ADP in the presence of a proton gradient across the membrane which is generated by electron transport complexes of the respiratory chain. F-type ATPases consist of two structural domains, F(1) - containing the extramembraneous catalytic core, and F(0) - containing the membrane proton channel, linked together by a central stalk and a peripheral stalk. During catalysis, ATP synthesis in the catalytic domain of F(1) is coupled via a rotary mechanism of the central stalk subunits to proton translocation. Subunits alpha and beta form the catalytic core in F(1). Rotation of the central stalk against the surrounding alpha(3)beta(3) subunits leads to hydrolysis of ATP in three separate catalytic sites on the beta subunits. Subunit alpha does not bear the catalytic high-affinity ATP-binding sites (By similarity).</text>
</comment>
<comment type="subunit">
    <text>F-type ATPases have 2 components, CF(1) - the catalytic core - and CF(0) - the membrane proton channel. CF(1) has five subunits: alpha(3), beta(3), gamma(1), delta(1), epsilon(1). CF(0) has three main subunits: a, b and c.</text>
</comment>
<comment type="subcellular location">
    <subcellularLocation>
        <location>Mitochondrion</location>
    </subcellularLocation>
    <subcellularLocation>
        <location>Mitochondrion inner membrane</location>
    </subcellularLocation>
    <text>Peripheral membrane protein.</text>
</comment>
<comment type="similarity">
    <text evidence="2">Belongs to the ATPase alpha/beta chains family.</text>
</comment>
<name>ATPA_ACACA</name>
<sequence>MKKYQFLKSNLLQNQNINELFLQYLKNDSNIGVIKSIVDGVVIIEGLSNVKAGEMLQFSNDIQGMALNLNSETVSAVLFGDETKIKPGEYVEGTGNIISVPVGMSLLGRVVNALGQPIDNKGDFPGSELKQVEVKAPGIITRQSVNEPMITGVKAIDCLVPVGRGQRELVIGDRQTGKTSICLDAVLNQKYENSKNKKNALYCIYTAIGQKRSSISKLVTLLEKTNSLEYSIIVAATASEAAPLQYLAPYTGCVIGEYFRDNGKHALIIYDDLSKQAVAYRQMSLLLRRPPGREAYPGDIFYLHSRLLERAAKLNKNFGGGSLTALPVVETQAGDVSAYIPTNVISITDGQIFLETNLFYNGIRPAVNVGLSVSRVGSAAQILAIKKLAGSLKLELAQYREALSFAQFGSDLDETTKNLLSRGNMLTELLNQNRFTPIPIENQFVLMYSGIKGFLTNVNNKVIRSYENELFNRISNYSVFNTNVILLSNNEYYKKKNNNNVVAFFISYFKFITTNIFGFSAK</sequence>
<protein>
    <recommendedName>
        <fullName>ATP synthase subunit alpha, mitochondrial</fullName>
    </recommendedName>
</protein>
<organism>
    <name type="scientific">Acanthamoeba castellanii</name>
    <name type="common">Amoeba</name>
    <dbReference type="NCBI Taxonomy" id="5755"/>
    <lineage>
        <taxon>Eukaryota</taxon>
        <taxon>Amoebozoa</taxon>
        <taxon>Discosea</taxon>
        <taxon>Longamoebia</taxon>
        <taxon>Centramoebida</taxon>
        <taxon>Acanthamoebidae</taxon>
        <taxon>Acanthamoeba</taxon>
    </lineage>
</organism>
<dbReference type="EMBL" id="U12386">
    <property type="protein sequence ID" value="AAD11834.1"/>
    <property type="molecule type" value="Genomic_DNA"/>
</dbReference>
<dbReference type="PIR" id="S53842">
    <property type="entry name" value="S53842"/>
</dbReference>
<dbReference type="RefSeq" id="NP_042541.1">
    <property type="nucleotide sequence ID" value="NC_001637.1"/>
</dbReference>
<dbReference type="SMR" id="Q37380"/>
<dbReference type="GeneID" id="1734037"/>
<dbReference type="VEuPathDB" id="AmoebaDB:ACA1_367940"/>
<dbReference type="GO" id="GO:0005743">
    <property type="term" value="C:mitochondrial inner membrane"/>
    <property type="evidence" value="ECO:0007669"/>
    <property type="project" value="UniProtKB-SubCell"/>
</dbReference>
<dbReference type="GO" id="GO:0045259">
    <property type="term" value="C:proton-transporting ATP synthase complex"/>
    <property type="evidence" value="ECO:0007669"/>
    <property type="project" value="UniProtKB-KW"/>
</dbReference>
<dbReference type="GO" id="GO:0043531">
    <property type="term" value="F:ADP binding"/>
    <property type="evidence" value="ECO:0007669"/>
    <property type="project" value="TreeGrafter"/>
</dbReference>
<dbReference type="GO" id="GO:0005524">
    <property type="term" value="F:ATP binding"/>
    <property type="evidence" value="ECO:0007669"/>
    <property type="project" value="UniProtKB-KW"/>
</dbReference>
<dbReference type="GO" id="GO:0046933">
    <property type="term" value="F:proton-transporting ATP synthase activity, rotational mechanism"/>
    <property type="evidence" value="ECO:0007669"/>
    <property type="project" value="InterPro"/>
</dbReference>
<dbReference type="CDD" id="cd18113">
    <property type="entry name" value="ATP-synt_F1_alpha_C"/>
    <property type="match status" value="1"/>
</dbReference>
<dbReference type="CDD" id="cd18116">
    <property type="entry name" value="ATP-synt_F1_alpha_N"/>
    <property type="match status" value="1"/>
</dbReference>
<dbReference type="CDD" id="cd01132">
    <property type="entry name" value="F1-ATPase_alpha_CD"/>
    <property type="match status" value="1"/>
</dbReference>
<dbReference type="FunFam" id="1.20.150.20:FF:000003">
    <property type="entry name" value="ATP synthase subunit alpha"/>
    <property type="match status" value="1"/>
</dbReference>
<dbReference type="FunFam" id="3.40.50.300:FF:002432">
    <property type="entry name" value="ATP synthase subunit alpha, mitochondrial"/>
    <property type="match status" value="1"/>
</dbReference>
<dbReference type="Gene3D" id="2.40.30.20">
    <property type="match status" value="1"/>
</dbReference>
<dbReference type="Gene3D" id="1.20.150.20">
    <property type="entry name" value="ATP synthase alpha/beta chain, C-terminal domain"/>
    <property type="match status" value="1"/>
</dbReference>
<dbReference type="Gene3D" id="3.40.50.300">
    <property type="entry name" value="P-loop containing nucleotide triphosphate hydrolases"/>
    <property type="match status" value="1"/>
</dbReference>
<dbReference type="HAMAP" id="MF_01346">
    <property type="entry name" value="ATP_synth_alpha_bact"/>
    <property type="match status" value="1"/>
</dbReference>
<dbReference type="InterPro" id="IPR023366">
    <property type="entry name" value="ATP_synth_asu-like_sf"/>
</dbReference>
<dbReference type="InterPro" id="IPR000793">
    <property type="entry name" value="ATP_synth_asu_C"/>
</dbReference>
<dbReference type="InterPro" id="IPR038376">
    <property type="entry name" value="ATP_synth_asu_C_sf"/>
</dbReference>
<dbReference type="InterPro" id="IPR033732">
    <property type="entry name" value="ATP_synth_F1_a_nt-bd_dom"/>
</dbReference>
<dbReference type="InterPro" id="IPR005294">
    <property type="entry name" value="ATP_synth_F1_asu"/>
</dbReference>
<dbReference type="InterPro" id="IPR020003">
    <property type="entry name" value="ATPase_a/bsu_AS"/>
</dbReference>
<dbReference type="InterPro" id="IPR004100">
    <property type="entry name" value="ATPase_F1/V1/A1_a/bsu_N"/>
</dbReference>
<dbReference type="InterPro" id="IPR036121">
    <property type="entry name" value="ATPase_F1/V1/A1_a/bsu_N_sf"/>
</dbReference>
<dbReference type="InterPro" id="IPR000194">
    <property type="entry name" value="ATPase_F1/V1/A1_a/bsu_nucl-bd"/>
</dbReference>
<dbReference type="InterPro" id="IPR027417">
    <property type="entry name" value="P-loop_NTPase"/>
</dbReference>
<dbReference type="NCBIfam" id="TIGR00962">
    <property type="entry name" value="atpA"/>
    <property type="match status" value="1"/>
</dbReference>
<dbReference type="NCBIfam" id="NF009884">
    <property type="entry name" value="PRK13343.1"/>
    <property type="match status" value="1"/>
</dbReference>
<dbReference type="PANTHER" id="PTHR48082">
    <property type="entry name" value="ATP SYNTHASE SUBUNIT ALPHA, MITOCHONDRIAL"/>
    <property type="match status" value="1"/>
</dbReference>
<dbReference type="PANTHER" id="PTHR48082:SF2">
    <property type="entry name" value="ATP SYNTHASE SUBUNIT ALPHA, MITOCHONDRIAL"/>
    <property type="match status" value="1"/>
</dbReference>
<dbReference type="Pfam" id="PF00006">
    <property type="entry name" value="ATP-synt_ab"/>
    <property type="match status" value="1"/>
</dbReference>
<dbReference type="Pfam" id="PF00306">
    <property type="entry name" value="ATP-synt_ab_C"/>
    <property type="match status" value="1"/>
</dbReference>
<dbReference type="Pfam" id="PF02874">
    <property type="entry name" value="ATP-synt_ab_N"/>
    <property type="match status" value="1"/>
</dbReference>
<dbReference type="SUPFAM" id="SSF47917">
    <property type="entry name" value="C-terminal domain of alpha and beta subunits of F1 ATP synthase"/>
    <property type="match status" value="1"/>
</dbReference>
<dbReference type="SUPFAM" id="SSF50615">
    <property type="entry name" value="N-terminal domain of alpha and beta subunits of F1 ATP synthase"/>
    <property type="match status" value="1"/>
</dbReference>
<dbReference type="SUPFAM" id="SSF52540">
    <property type="entry name" value="P-loop containing nucleoside triphosphate hydrolases"/>
    <property type="match status" value="1"/>
</dbReference>
<dbReference type="PROSITE" id="PS00152">
    <property type="entry name" value="ATPASE_ALPHA_BETA"/>
    <property type="match status" value="1"/>
</dbReference>
<keyword id="KW-0066">ATP synthesis</keyword>
<keyword id="KW-0067">ATP-binding</keyword>
<keyword id="KW-0139">CF(1)</keyword>
<keyword id="KW-0375">Hydrogen ion transport</keyword>
<keyword id="KW-0406">Ion transport</keyword>
<keyword id="KW-0472">Membrane</keyword>
<keyword id="KW-0496">Mitochondrion</keyword>
<keyword id="KW-0999">Mitochondrion inner membrane</keyword>
<keyword id="KW-0547">Nucleotide-binding</keyword>
<keyword id="KW-0813">Transport</keyword>